<accession>P48370</accession>
<sequence>MQDNSVNETKNIVEVGIDSSIEESYLAYSMSVIIGRALPDARDGLKPVHRRILYAMHELGLTSKVAYKKSARIVGDVIGKYHPHGDNAVYDALVRMAQDFSMRLELVDGQGNFGSIDGDNAAAMRYTEARMTKASEEILRDIDKDTIDFVPNYDDTLKEPDILPSRLPNLLVNGANGIAVGMATSIPPHRMDEIIDALVHVLENPNAGLDEILEFVKGPDFPTGGIIYGKAGIIEAYKTGRGRVKVRAKVHVEKTKNKEIIVLDEMPFQTNKAKLVEQISDLAREKQIEGISEVRDESDREGIRVVIELKRDAMSEIVLNHLYKLTTMETTFSIILLAIYNKEPKIFTLLELLHLFLNHRKTIIIRRTIFELEKAKARAHILEGYLIALDNIDEIVRLIKTSQSPEAAKNALMERFTLSEIQSKAILEMRLQRLTGLERDKIKEEYQNLLELIDDLNGILKSEDRLNGVVKTELLEVKEQFSSPRRTEIQESYENIDIEDLIANEPMVVSMSYKGYVKRVDLKAYEKQNRGGKGKLSGSTYEDDFIENFFVANTHDILLFITNKGQLYHLKVYKIPEASRIAMGKAIVNLISLAPDEKIMATLSTKDFSDERSLAFFTKNGVVKRTNLSEFESNRSCGIRAIVLDEGDELVSAKVVDKNAKHLLIASHLGIFIKFPLEEVREIGRTTRGVIGIKLNENDFVVGAVVISDDGNKLLSVSENGLGKQTLAEAYRGQSRGGKGVIGMKLTQKTGNLVGVISVDDENLDLMILTASAKMIRVSIKDIRETGRNASGVKLINTADKVMYVNSCPKEEEPENLETSSAQNLFE</sequence>
<gene>
    <name evidence="1" type="primary">gyrA</name>
    <name type="ordered locus">HP_0701</name>
</gene>
<organism>
    <name type="scientific">Helicobacter pylori (strain ATCC 700392 / 26695)</name>
    <name type="common">Campylobacter pylori</name>
    <dbReference type="NCBI Taxonomy" id="85962"/>
    <lineage>
        <taxon>Bacteria</taxon>
        <taxon>Pseudomonadati</taxon>
        <taxon>Campylobacterota</taxon>
        <taxon>Epsilonproteobacteria</taxon>
        <taxon>Campylobacterales</taxon>
        <taxon>Helicobacteraceae</taxon>
        <taxon>Helicobacter</taxon>
    </lineage>
</organism>
<feature type="chain" id="PRO_0000145236" description="DNA gyrase subunit A">
    <location>
        <begin position="1"/>
        <end position="827"/>
    </location>
</feature>
<feature type="domain" description="Topo IIA-type catalytic" evidence="2">
    <location>
        <begin position="38"/>
        <end position="501"/>
    </location>
</feature>
<feature type="short sequence motif" description="GyrA-box" evidence="1">
    <location>
        <begin position="528"/>
        <end position="534"/>
    </location>
</feature>
<feature type="active site" description="O-(5'-phospho-DNA)-tyrosine intermediate" evidence="1">
    <location>
        <position position="126"/>
    </location>
</feature>
<feature type="sequence conflict" description="In Ref. 1; AAA74376." evidence="3" ref="1">
    <original>NS</original>
    <variation>RL</variation>
    <location>
        <begin position="4"/>
        <end position="5"/>
    </location>
</feature>
<feature type="sequence conflict" description="In Ref. 1; AAA74376." evidence="3" ref="1">
    <original>M</original>
    <variation>I</variation>
    <location>
        <position position="191"/>
    </location>
</feature>
<feature type="sequence conflict" description="In Ref. 1; AAA74376." evidence="3" ref="1">
    <original>V</original>
    <variation>A</variation>
    <location>
        <position position="199"/>
    </location>
</feature>
<feature type="sequence conflict" description="In Ref. 1; AAA74376." evidence="3" ref="1">
    <original>G</original>
    <variation>E</variation>
    <location>
        <position position="208"/>
    </location>
</feature>
<feature type="sequence conflict" description="In Ref. 1; AAA74376." evidence="3" ref="1">
    <original>H</original>
    <variation>R</variation>
    <location>
        <position position="354"/>
    </location>
</feature>
<feature type="sequence conflict" description="In Ref. 1; AAA74376." evidence="3" ref="1">
    <original>R</original>
    <variation>Q</variation>
    <location>
        <position position="397"/>
    </location>
</feature>
<feature type="sequence conflict" description="In Ref. 1; AAA74376." evidence="3" ref="1">
    <original>Q</original>
    <variation>P</variation>
    <location>
        <position position="403"/>
    </location>
</feature>
<feature type="sequence conflict" description="In Ref. 1; AAA74376." evidence="3" ref="1">
    <original>N</original>
    <variation>S</variation>
    <location>
        <position position="495"/>
    </location>
</feature>
<feature type="sequence conflict" description="In Ref. 1; AAA74376." evidence="3" ref="1">
    <original>A</original>
    <variation>V</variation>
    <location>
        <position position="524"/>
    </location>
</feature>
<feature type="sequence conflict" description="In Ref. 1; AAA74376." evidence="3" ref="1">
    <original>D</original>
    <variation>N</variation>
    <location>
        <position position="610"/>
    </location>
</feature>
<feature type="sequence conflict" description="In Ref. 1; AAA74376." evidence="3" ref="1">
    <original>E</original>
    <variation>G</variation>
    <location>
        <position position="632"/>
    </location>
</feature>
<feature type="sequence conflict" description="In Ref. 1; AAA74376." evidence="3" ref="1">
    <original>E</original>
    <variation>D</variation>
    <location>
        <position position="679"/>
    </location>
</feature>
<feature type="sequence conflict" description="In Ref. 1; AAA74376." evidence="3" ref="1">
    <original>I</original>
    <variation>M</variation>
    <location>
        <position position="683"/>
    </location>
</feature>
<feature type="sequence conflict" description="In Ref. 1; AAA74376." evidence="3" ref="1">
    <original>TT</original>
    <variation>NA</variation>
    <location>
        <begin position="686"/>
        <end position="687"/>
    </location>
</feature>
<feature type="sequence conflict" description="In Ref. 1; AAA74376." evidence="3" ref="1">
    <original>K</original>
    <variation>R</variation>
    <location>
        <position position="694"/>
    </location>
</feature>
<feature type="sequence conflict" description="In Ref. 1; AAA74376." evidence="3" ref="1">
    <original>G</original>
    <variation>E</variation>
    <location>
        <position position="733"/>
    </location>
</feature>
<feature type="sequence conflict" description="In Ref. 1; AAA74376." evidence="3" ref="1">
    <original>T</original>
    <variation>N</variation>
    <location>
        <position position="819"/>
    </location>
</feature>
<feature type="sequence conflict" description="In Ref. 1; AAA74376." evidence="3" ref="1">
    <original>SA</original>
    <variation>PT</variation>
    <location>
        <begin position="821"/>
        <end position="822"/>
    </location>
</feature>
<feature type="sequence conflict" description="In Ref. 1; AAA74376." evidence="3" ref="1">
    <location>
        <position position="824"/>
    </location>
</feature>
<protein>
    <recommendedName>
        <fullName evidence="1">DNA gyrase subunit A</fullName>
        <ecNumber evidence="1">5.6.2.2</ecNumber>
    </recommendedName>
</protein>
<comment type="function">
    <text evidence="1">A type II topoisomerase that negatively supercoils closed circular double-stranded (ds) DNA in an ATP-dependent manner to modulate DNA topology and maintain chromosomes in an underwound state. Negative supercoiling favors strand separation, and DNA replication, transcription, recombination and repair, all of which involve strand separation. Also able to catalyze the interconversion of other topological isomers of dsDNA rings, including catenanes and knotted rings. Type II topoisomerases break and join 2 DNA strands simultaneously in an ATP-dependent manner.</text>
</comment>
<comment type="catalytic activity">
    <reaction evidence="1">
        <text>ATP-dependent breakage, passage and rejoining of double-stranded DNA.</text>
        <dbReference type="EC" id="5.6.2.2"/>
    </reaction>
</comment>
<comment type="subunit">
    <text evidence="1">Heterotetramer, composed of two GyrA and two GyrB chains. In the heterotetramer, GyrA contains the active site tyrosine that forms a transient covalent intermediate with DNA, while GyrB binds cofactors and catalyzes ATP hydrolysis.</text>
</comment>
<comment type="subcellular location">
    <subcellularLocation>
        <location evidence="1">Cytoplasm</location>
    </subcellularLocation>
</comment>
<comment type="miscellaneous">
    <text evidence="1">Few gyrases are as efficient as E.coli at forming negative supercoils. Not all organisms have 2 type II topoisomerases; in organisms with a single type II topoisomerase this enzyme also has to decatenate newly replicated chromosomes.</text>
</comment>
<comment type="similarity">
    <text evidence="1">Belongs to the type II topoisomerase GyrA/ParC subunit family.</text>
</comment>
<reference key="1">
    <citation type="journal article" date="1995" name="Antimicrob. Agents Chemother.">
        <title>Nucleotide sequence of the gyrA gene and characterization of ciprofloxacin-resistant mutants of Helicobacter pylori.</title>
        <authorList>
            <person name="Moore R.A."/>
            <person name="Beckthold B."/>
            <person name="Wong S."/>
            <person name="Kureishi A."/>
            <person name="Bryan L.E."/>
        </authorList>
    </citation>
    <scope>NUCLEOTIDE SEQUENCE [GENOMIC DNA]</scope>
    <source>
        <strain>UC946</strain>
    </source>
</reference>
<reference key="2">
    <citation type="journal article" date="1997" name="Nature">
        <title>The complete genome sequence of the gastric pathogen Helicobacter pylori.</title>
        <authorList>
            <person name="Tomb J.-F."/>
            <person name="White O."/>
            <person name="Kerlavage A.R."/>
            <person name="Clayton R.A."/>
            <person name="Sutton G.G."/>
            <person name="Fleischmann R.D."/>
            <person name="Ketchum K.A."/>
            <person name="Klenk H.-P."/>
            <person name="Gill S.R."/>
            <person name="Dougherty B.A."/>
            <person name="Nelson K.E."/>
            <person name="Quackenbush J."/>
            <person name="Zhou L."/>
            <person name="Kirkness E.F."/>
            <person name="Peterson S.N."/>
            <person name="Loftus B.J."/>
            <person name="Richardson D.L."/>
            <person name="Dodson R.J."/>
            <person name="Khalak H.G."/>
            <person name="Glodek A."/>
            <person name="McKenney K."/>
            <person name="FitzGerald L.M."/>
            <person name="Lee N."/>
            <person name="Adams M.D."/>
            <person name="Hickey E.K."/>
            <person name="Berg D.E."/>
            <person name="Gocayne J.D."/>
            <person name="Utterback T.R."/>
            <person name="Peterson J.D."/>
            <person name="Kelley J.M."/>
            <person name="Cotton M.D."/>
            <person name="Weidman J.F."/>
            <person name="Fujii C."/>
            <person name="Bowman C."/>
            <person name="Watthey L."/>
            <person name="Wallin E."/>
            <person name="Hayes W.S."/>
            <person name="Borodovsky M."/>
            <person name="Karp P.D."/>
            <person name="Smith H.O."/>
            <person name="Fraser C.M."/>
            <person name="Venter J.C."/>
        </authorList>
    </citation>
    <scope>NUCLEOTIDE SEQUENCE [LARGE SCALE GENOMIC DNA]</scope>
    <source>
        <strain>ATCC 700392 / 26695</strain>
    </source>
</reference>
<name>GYRA_HELPY</name>
<proteinExistence type="inferred from homology"/>
<keyword id="KW-0067">ATP-binding</keyword>
<keyword id="KW-0963">Cytoplasm</keyword>
<keyword id="KW-0238">DNA-binding</keyword>
<keyword id="KW-0413">Isomerase</keyword>
<keyword id="KW-0547">Nucleotide-binding</keyword>
<keyword id="KW-1185">Reference proteome</keyword>
<keyword id="KW-0799">Topoisomerase</keyword>
<dbReference type="EC" id="5.6.2.2" evidence="1"/>
<dbReference type="EMBL" id="L29481">
    <property type="protein sequence ID" value="AAA74376.1"/>
    <property type="molecule type" value="Genomic_DNA"/>
</dbReference>
<dbReference type="EMBL" id="AE000511">
    <property type="protein sequence ID" value="AAD07753.1"/>
    <property type="molecule type" value="Genomic_DNA"/>
</dbReference>
<dbReference type="PIR" id="E64607">
    <property type="entry name" value="E64607"/>
</dbReference>
<dbReference type="RefSeq" id="NP_207495.1">
    <property type="nucleotide sequence ID" value="NC_000915.1"/>
</dbReference>
<dbReference type="RefSeq" id="WP_001153763.1">
    <property type="nucleotide sequence ID" value="NC_018939.1"/>
</dbReference>
<dbReference type="SMR" id="P48370"/>
<dbReference type="DIP" id="DIP-3353N"/>
<dbReference type="FunCoup" id="P48370">
    <property type="interactions" value="311"/>
</dbReference>
<dbReference type="IntAct" id="P48370">
    <property type="interactions" value="4"/>
</dbReference>
<dbReference type="MINT" id="P48370"/>
<dbReference type="STRING" id="85962.HP_0701"/>
<dbReference type="PaxDb" id="85962-C694_03615"/>
<dbReference type="EnsemblBacteria" id="AAD07753">
    <property type="protein sequence ID" value="AAD07753"/>
    <property type="gene ID" value="HP_0701"/>
</dbReference>
<dbReference type="KEGG" id="heo:C694_03615"/>
<dbReference type="KEGG" id="hpy:HP_0701"/>
<dbReference type="PATRIC" id="fig|85962.47.peg.750"/>
<dbReference type="eggNOG" id="COG0188">
    <property type="taxonomic scope" value="Bacteria"/>
</dbReference>
<dbReference type="InParanoid" id="P48370"/>
<dbReference type="OrthoDB" id="9806486at2"/>
<dbReference type="PhylomeDB" id="P48370"/>
<dbReference type="Proteomes" id="UP000000429">
    <property type="component" value="Chromosome"/>
</dbReference>
<dbReference type="GO" id="GO:0005694">
    <property type="term" value="C:chromosome"/>
    <property type="evidence" value="ECO:0007669"/>
    <property type="project" value="InterPro"/>
</dbReference>
<dbReference type="GO" id="GO:0005737">
    <property type="term" value="C:cytoplasm"/>
    <property type="evidence" value="ECO:0000318"/>
    <property type="project" value="GO_Central"/>
</dbReference>
<dbReference type="GO" id="GO:0009330">
    <property type="term" value="C:DNA topoisomerase type II (double strand cut, ATP-hydrolyzing) complex"/>
    <property type="evidence" value="ECO:0000318"/>
    <property type="project" value="GO_Central"/>
</dbReference>
<dbReference type="GO" id="GO:0005524">
    <property type="term" value="F:ATP binding"/>
    <property type="evidence" value="ECO:0000318"/>
    <property type="project" value="GO_Central"/>
</dbReference>
<dbReference type="GO" id="GO:0003677">
    <property type="term" value="F:DNA binding"/>
    <property type="evidence" value="ECO:0000318"/>
    <property type="project" value="GO_Central"/>
</dbReference>
<dbReference type="GO" id="GO:0034335">
    <property type="term" value="F:DNA negative supercoiling activity"/>
    <property type="evidence" value="ECO:0007669"/>
    <property type="project" value="UniProtKB-ARBA"/>
</dbReference>
<dbReference type="GO" id="GO:0006265">
    <property type="term" value="P:DNA topological change"/>
    <property type="evidence" value="ECO:0000318"/>
    <property type="project" value="GO_Central"/>
</dbReference>
<dbReference type="GO" id="GO:0006261">
    <property type="term" value="P:DNA-templated DNA replication"/>
    <property type="evidence" value="ECO:0007669"/>
    <property type="project" value="UniProtKB-UniRule"/>
</dbReference>
<dbReference type="CDD" id="cd00187">
    <property type="entry name" value="TOP4c"/>
    <property type="match status" value="1"/>
</dbReference>
<dbReference type="FunFam" id="1.10.268.10:FF:000001">
    <property type="entry name" value="DNA gyrase subunit A"/>
    <property type="match status" value="1"/>
</dbReference>
<dbReference type="FunFam" id="3.30.1360.40:FF:000002">
    <property type="entry name" value="DNA gyrase subunit A"/>
    <property type="match status" value="1"/>
</dbReference>
<dbReference type="FunFam" id="3.90.199.10:FF:000001">
    <property type="entry name" value="DNA gyrase subunit A"/>
    <property type="match status" value="1"/>
</dbReference>
<dbReference type="FunFam" id="2.120.10.90:FF:000005">
    <property type="entry name" value="DNA topoisomerase 4 subunit A"/>
    <property type="match status" value="1"/>
</dbReference>
<dbReference type="Gene3D" id="3.30.1360.40">
    <property type="match status" value="1"/>
</dbReference>
<dbReference type="Gene3D" id="2.120.10.90">
    <property type="entry name" value="DNA gyrase/topoisomerase IV, subunit A, C-terminal"/>
    <property type="match status" value="1"/>
</dbReference>
<dbReference type="Gene3D" id="3.90.199.10">
    <property type="entry name" value="Topoisomerase II, domain 5"/>
    <property type="match status" value="1"/>
</dbReference>
<dbReference type="Gene3D" id="1.10.268.10">
    <property type="entry name" value="Topoisomerase, domain 3"/>
    <property type="match status" value="1"/>
</dbReference>
<dbReference type="HAMAP" id="MF_01897">
    <property type="entry name" value="GyrA"/>
    <property type="match status" value="1"/>
</dbReference>
<dbReference type="InterPro" id="IPR005743">
    <property type="entry name" value="GyrA"/>
</dbReference>
<dbReference type="InterPro" id="IPR006691">
    <property type="entry name" value="GyrA/parC_rep"/>
</dbReference>
<dbReference type="InterPro" id="IPR035516">
    <property type="entry name" value="Gyrase/topoIV_suA_C"/>
</dbReference>
<dbReference type="InterPro" id="IPR013760">
    <property type="entry name" value="Topo_IIA-like_dom_sf"/>
</dbReference>
<dbReference type="InterPro" id="IPR013758">
    <property type="entry name" value="Topo_IIA_A/C_ab"/>
</dbReference>
<dbReference type="InterPro" id="IPR013757">
    <property type="entry name" value="Topo_IIA_A_a_sf"/>
</dbReference>
<dbReference type="InterPro" id="IPR002205">
    <property type="entry name" value="Topo_IIA_dom_A"/>
</dbReference>
<dbReference type="InterPro" id="IPR050220">
    <property type="entry name" value="Type_II_DNA_Topoisomerases"/>
</dbReference>
<dbReference type="NCBIfam" id="TIGR01063">
    <property type="entry name" value="gyrA"/>
    <property type="match status" value="1"/>
</dbReference>
<dbReference type="NCBIfam" id="NF004043">
    <property type="entry name" value="PRK05560.1"/>
    <property type="match status" value="1"/>
</dbReference>
<dbReference type="NCBIfam" id="NF004044">
    <property type="entry name" value="PRK05561.1"/>
    <property type="match status" value="1"/>
</dbReference>
<dbReference type="PANTHER" id="PTHR43493:SF5">
    <property type="entry name" value="DNA GYRASE SUBUNIT A, CHLOROPLASTIC_MITOCHONDRIAL"/>
    <property type="match status" value="1"/>
</dbReference>
<dbReference type="PANTHER" id="PTHR43493">
    <property type="entry name" value="DNA GYRASE/TOPOISOMERASE SUBUNIT A"/>
    <property type="match status" value="1"/>
</dbReference>
<dbReference type="Pfam" id="PF03989">
    <property type="entry name" value="DNA_gyraseA_C"/>
    <property type="match status" value="6"/>
</dbReference>
<dbReference type="Pfam" id="PF00521">
    <property type="entry name" value="DNA_topoisoIV"/>
    <property type="match status" value="1"/>
</dbReference>
<dbReference type="SMART" id="SM00434">
    <property type="entry name" value="TOP4c"/>
    <property type="match status" value="1"/>
</dbReference>
<dbReference type="SUPFAM" id="SSF101904">
    <property type="entry name" value="GyrA/ParC C-terminal domain-like"/>
    <property type="match status" value="1"/>
</dbReference>
<dbReference type="SUPFAM" id="SSF56719">
    <property type="entry name" value="Type II DNA topoisomerase"/>
    <property type="match status" value="1"/>
</dbReference>
<dbReference type="PROSITE" id="PS52040">
    <property type="entry name" value="TOPO_IIA"/>
    <property type="match status" value="1"/>
</dbReference>
<evidence type="ECO:0000255" key="1">
    <source>
        <dbReference type="HAMAP-Rule" id="MF_01897"/>
    </source>
</evidence>
<evidence type="ECO:0000255" key="2">
    <source>
        <dbReference type="PROSITE-ProRule" id="PRU01384"/>
    </source>
</evidence>
<evidence type="ECO:0000305" key="3"/>